<protein>
    <recommendedName>
        <fullName evidence="2">tRNA (guanine-N(7)-)-methyltransferase</fullName>
        <ecNumber evidence="2">2.1.1.33</ecNumber>
    </recommendedName>
    <alternativeName>
        <fullName evidence="2">tRNA (guanine(46)-N(7))-methyltransferase</fullName>
    </alternativeName>
    <alternativeName>
        <fullName evidence="2">tRNA(m7G46)-methyltransferase</fullName>
    </alternativeName>
</protein>
<reference key="1">
    <citation type="journal article" date="2009" name="J. Bacteriol.">
        <title>Complete genome sequence of Macrococcus caseolyticus strain JCSCS5402, reflecting the ancestral genome of the human-pathogenic staphylococci.</title>
        <authorList>
            <person name="Baba T."/>
            <person name="Kuwahara-Arai K."/>
            <person name="Uchiyama I."/>
            <person name="Takeuchi F."/>
            <person name="Ito T."/>
            <person name="Hiramatsu K."/>
        </authorList>
    </citation>
    <scope>NUCLEOTIDE SEQUENCE [LARGE SCALE GENOMIC DNA]</scope>
    <source>
        <strain>JCSC5402</strain>
    </source>
</reference>
<sequence length="210" mass="25029">MRMRNKPWAEDFLLQHDDIVSIDLARKDHIVDWFDQVQPIHIEVGSGMGRFITEMAKAHPEINYIGIERDKNVMIRIVEKAVEQNIRNLRLLTVDAEKLTEIFNEGEIDRIYLNFSDPWPKARHAKRRLTHENFLKVYETILDKDGEIHFKTDNQALFEYSIESMSHYGMKLKNINLNLHDNEPEDNIRTEYEDKFSNKGFRINRLEARF</sequence>
<name>TRMB_MACCJ</name>
<keyword id="KW-0489">Methyltransferase</keyword>
<keyword id="KW-1185">Reference proteome</keyword>
<keyword id="KW-0949">S-adenosyl-L-methionine</keyword>
<keyword id="KW-0808">Transferase</keyword>
<keyword id="KW-0819">tRNA processing</keyword>
<comment type="function">
    <text evidence="2">Catalyzes the formation of N(7)-methylguanine at position 46 (m7G46) in tRNA.</text>
</comment>
<comment type="catalytic activity">
    <reaction evidence="2">
        <text>guanosine(46) in tRNA + S-adenosyl-L-methionine = N(7)-methylguanosine(46) in tRNA + S-adenosyl-L-homocysteine</text>
        <dbReference type="Rhea" id="RHEA:42708"/>
        <dbReference type="Rhea" id="RHEA-COMP:10188"/>
        <dbReference type="Rhea" id="RHEA-COMP:10189"/>
        <dbReference type="ChEBI" id="CHEBI:57856"/>
        <dbReference type="ChEBI" id="CHEBI:59789"/>
        <dbReference type="ChEBI" id="CHEBI:74269"/>
        <dbReference type="ChEBI" id="CHEBI:74480"/>
        <dbReference type="EC" id="2.1.1.33"/>
    </reaction>
</comment>
<comment type="pathway">
    <text evidence="2">tRNA modification; N(7)-methylguanine-tRNA biosynthesis.</text>
</comment>
<comment type="similarity">
    <text evidence="2">Belongs to the class I-like SAM-binding methyltransferase superfamily. TrmB family.</text>
</comment>
<gene>
    <name evidence="2" type="primary">trmB</name>
    <name type="ordered locus">MCCL_1428</name>
</gene>
<accession>B9E7G7</accession>
<organism>
    <name type="scientific">Macrococcus caseolyticus (strain JCSC5402)</name>
    <name type="common">Macrococcoides caseolyticum</name>
    <dbReference type="NCBI Taxonomy" id="458233"/>
    <lineage>
        <taxon>Bacteria</taxon>
        <taxon>Bacillati</taxon>
        <taxon>Bacillota</taxon>
        <taxon>Bacilli</taxon>
        <taxon>Bacillales</taxon>
        <taxon>Staphylococcaceae</taxon>
        <taxon>Macrococcoides</taxon>
    </lineage>
</organism>
<proteinExistence type="inferred from homology"/>
<dbReference type="EC" id="2.1.1.33" evidence="2"/>
<dbReference type="EMBL" id="AP009484">
    <property type="protein sequence ID" value="BAH18135.1"/>
    <property type="molecule type" value="Genomic_DNA"/>
</dbReference>
<dbReference type="RefSeq" id="WP_012657333.1">
    <property type="nucleotide sequence ID" value="NC_011999.1"/>
</dbReference>
<dbReference type="SMR" id="B9E7G7"/>
<dbReference type="STRING" id="458233.MCCL_1428"/>
<dbReference type="GeneID" id="61128672"/>
<dbReference type="KEGG" id="mcl:MCCL_1428"/>
<dbReference type="eggNOG" id="COG0220">
    <property type="taxonomic scope" value="Bacteria"/>
</dbReference>
<dbReference type="HOGENOM" id="CLU_050910_2_1_9"/>
<dbReference type="OrthoDB" id="9802090at2"/>
<dbReference type="UniPathway" id="UPA00989"/>
<dbReference type="Proteomes" id="UP000001383">
    <property type="component" value="Chromosome"/>
</dbReference>
<dbReference type="GO" id="GO:0043527">
    <property type="term" value="C:tRNA methyltransferase complex"/>
    <property type="evidence" value="ECO:0007669"/>
    <property type="project" value="TreeGrafter"/>
</dbReference>
<dbReference type="GO" id="GO:0008176">
    <property type="term" value="F:tRNA (guanine(46)-N7)-methyltransferase activity"/>
    <property type="evidence" value="ECO:0007669"/>
    <property type="project" value="UniProtKB-UniRule"/>
</dbReference>
<dbReference type="CDD" id="cd02440">
    <property type="entry name" value="AdoMet_MTases"/>
    <property type="match status" value="1"/>
</dbReference>
<dbReference type="FunFam" id="3.40.50.150:FF:000035">
    <property type="entry name" value="tRNA (guanine-N(7)-)-methyltransferase"/>
    <property type="match status" value="1"/>
</dbReference>
<dbReference type="Gene3D" id="3.40.50.150">
    <property type="entry name" value="Vaccinia Virus protein VP39"/>
    <property type="match status" value="1"/>
</dbReference>
<dbReference type="HAMAP" id="MF_01057">
    <property type="entry name" value="tRNA_methyltr_TrmB"/>
    <property type="match status" value="1"/>
</dbReference>
<dbReference type="InterPro" id="IPR029063">
    <property type="entry name" value="SAM-dependent_MTases_sf"/>
</dbReference>
<dbReference type="InterPro" id="IPR003358">
    <property type="entry name" value="tRNA_(Gua-N-7)_MeTrfase_Trmb"/>
</dbReference>
<dbReference type="InterPro" id="IPR055361">
    <property type="entry name" value="tRNA_methyltr_TrmB_bact"/>
</dbReference>
<dbReference type="NCBIfam" id="NF001080">
    <property type="entry name" value="PRK00121.2-2"/>
    <property type="match status" value="1"/>
</dbReference>
<dbReference type="NCBIfam" id="TIGR00091">
    <property type="entry name" value="tRNA (guanosine(46)-N7)-methyltransferase TrmB"/>
    <property type="match status" value="1"/>
</dbReference>
<dbReference type="PANTHER" id="PTHR23417">
    <property type="entry name" value="3-DEOXY-D-MANNO-OCTULOSONIC-ACID TRANSFERASE/TRNA GUANINE-N 7 - -METHYLTRANSFERASE"/>
    <property type="match status" value="1"/>
</dbReference>
<dbReference type="PANTHER" id="PTHR23417:SF14">
    <property type="entry name" value="PENTACOTRIPEPTIDE-REPEAT REGION OF PRORP DOMAIN-CONTAINING PROTEIN"/>
    <property type="match status" value="1"/>
</dbReference>
<dbReference type="Pfam" id="PF02390">
    <property type="entry name" value="Methyltransf_4"/>
    <property type="match status" value="1"/>
</dbReference>
<dbReference type="SUPFAM" id="SSF53335">
    <property type="entry name" value="S-adenosyl-L-methionine-dependent methyltransferases"/>
    <property type="match status" value="1"/>
</dbReference>
<dbReference type="PROSITE" id="PS51625">
    <property type="entry name" value="SAM_MT_TRMB"/>
    <property type="match status" value="1"/>
</dbReference>
<feature type="chain" id="PRO_1000149657" description="tRNA (guanine-N(7)-)-methyltransferase">
    <location>
        <begin position="1"/>
        <end position="210"/>
    </location>
</feature>
<feature type="active site" evidence="1">
    <location>
        <position position="117"/>
    </location>
</feature>
<feature type="binding site" evidence="2">
    <location>
        <position position="43"/>
    </location>
    <ligand>
        <name>S-adenosyl-L-methionine</name>
        <dbReference type="ChEBI" id="CHEBI:59789"/>
    </ligand>
</feature>
<feature type="binding site" evidence="2">
    <location>
        <position position="68"/>
    </location>
    <ligand>
        <name>S-adenosyl-L-methionine</name>
        <dbReference type="ChEBI" id="CHEBI:59789"/>
    </ligand>
</feature>
<feature type="binding site" evidence="2">
    <location>
        <position position="95"/>
    </location>
    <ligand>
        <name>S-adenosyl-L-methionine</name>
        <dbReference type="ChEBI" id="CHEBI:59789"/>
    </ligand>
</feature>
<feature type="binding site" evidence="2">
    <location>
        <position position="117"/>
    </location>
    <ligand>
        <name>S-adenosyl-L-methionine</name>
        <dbReference type="ChEBI" id="CHEBI:59789"/>
    </ligand>
</feature>
<feature type="binding site" evidence="2">
    <location>
        <position position="121"/>
    </location>
    <ligand>
        <name>substrate</name>
    </ligand>
</feature>
<feature type="binding site" evidence="2">
    <location>
        <position position="153"/>
    </location>
    <ligand>
        <name>substrate</name>
    </ligand>
</feature>
<feature type="binding site" evidence="2">
    <location>
        <begin position="190"/>
        <end position="193"/>
    </location>
    <ligand>
        <name>substrate</name>
    </ligand>
</feature>
<evidence type="ECO:0000250" key="1"/>
<evidence type="ECO:0000255" key="2">
    <source>
        <dbReference type="HAMAP-Rule" id="MF_01057"/>
    </source>
</evidence>